<dbReference type="EMBL" id="CR382138">
    <property type="protein sequence ID" value="CAG89390.2"/>
    <property type="molecule type" value="Genomic_DNA"/>
</dbReference>
<dbReference type="RefSeq" id="XP_461020.2">
    <property type="nucleotide sequence ID" value="XM_461020.1"/>
</dbReference>
<dbReference type="SMR" id="Q6BLA1"/>
<dbReference type="FunCoup" id="Q6BLA1">
    <property type="interactions" value="216"/>
</dbReference>
<dbReference type="STRING" id="284592.Q6BLA1"/>
<dbReference type="GeneID" id="2904141"/>
<dbReference type="KEGG" id="dha:DEHA2F15180g"/>
<dbReference type="VEuPathDB" id="FungiDB:DEHA2F15180g"/>
<dbReference type="eggNOG" id="KOG2160">
    <property type="taxonomic scope" value="Eukaryota"/>
</dbReference>
<dbReference type="HOGENOM" id="CLU_046722_1_0_1"/>
<dbReference type="InParanoid" id="Q6BLA1"/>
<dbReference type="OMA" id="LHWSIAN"/>
<dbReference type="OrthoDB" id="10250458at2759"/>
<dbReference type="Proteomes" id="UP000000599">
    <property type="component" value="Chromosome F"/>
</dbReference>
<dbReference type="GO" id="GO:0005829">
    <property type="term" value="C:cytosol"/>
    <property type="evidence" value="ECO:0007669"/>
    <property type="project" value="EnsemblFungi"/>
</dbReference>
<dbReference type="GO" id="GO:0005783">
    <property type="term" value="C:endoplasmic reticulum"/>
    <property type="evidence" value="ECO:0007669"/>
    <property type="project" value="TreeGrafter"/>
</dbReference>
<dbReference type="GO" id="GO:0000774">
    <property type="term" value="F:adenyl-nucleotide exchange factor activity"/>
    <property type="evidence" value="ECO:0007669"/>
    <property type="project" value="EnsemblFungi"/>
</dbReference>
<dbReference type="GO" id="GO:0071629">
    <property type="term" value="P:cytoplasm protein quality control by the ubiquitin-proteasome system"/>
    <property type="evidence" value="ECO:0007669"/>
    <property type="project" value="EnsemblFungi"/>
</dbReference>
<dbReference type="GO" id="GO:0006417">
    <property type="term" value="P:regulation of translation"/>
    <property type="evidence" value="ECO:0007669"/>
    <property type="project" value="UniProtKB-KW"/>
</dbReference>
<dbReference type="Gene3D" id="1.25.10.10">
    <property type="entry name" value="Leucine-rich Repeat Variant"/>
    <property type="match status" value="1"/>
</dbReference>
<dbReference type="InterPro" id="IPR011989">
    <property type="entry name" value="ARM-like"/>
</dbReference>
<dbReference type="InterPro" id="IPR016024">
    <property type="entry name" value="ARM-type_fold"/>
</dbReference>
<dbReference type="InterPro" id="IPR050693">
    <property type="entry name" value="Hsp70_NEF-Inhibitors"/>
</dbReference>
<dbReference type="InterPro" id="IPR013918">
    <property type="entry name" value="Nucleotide_exch_fac_Fes1"/>
</dbReference>
<dbReference type="PANTHER" id="PTHR19316:SF18">
    <property type="entry name" value="HSP70-BINDING PROTEIN 1"/>
    <property type="match status" value="1"/>
</dbReference>
<dbReference type="PANTHER" id="PTHR19316">
    <property type="entry name" value="PROTEIN FOLDING REGULATOR"/>
    <property type="match status" value="1"/>
</dbReference>
<dbReference type="Pfam" id="PF08609">
    <property type="entry name" value="Fes1"/>
    <property type="match status" value="1"/>
</dbReference>
<dbReference type="SUPFAM" id="SSF48371">
    <property type="entry name" value="ARM repeat"/>
    <property type="match status" value="1"/>
</dbReference>
<organism>
    <name type="scientific">Debaryomyces hansenii (strain ATCC 36239 / CBS 767 / BCRC 21394 / JCM 1990 / NBRC 0083 / IGC 2968)</name>
    <name type="common">Yeast</name>
    <name type="synonym">Torulaspora hansenii</name>
    <dbReference type="NCBI Taxonomy" id="284592"/>
    <lineage>
        <taxon>Eukaryota</taxon>
        <taxon>Fungi</taxon>
        <taxon>Dikarya</taxon>
        <taxon>Ascomycota</taxon>
        <taxon>Saccharomycotina</taxon>
        <taxon>Pichiomycetes</taxon>
        <taxon>Debaryomycetaceae</taxon>
        <taxon>Debaryomyces</taxon>
    </lineage>
</organism>
<evidence type="ECO:0000250" key="1"/>
<evidence type="ECO:0000305" key="2"/>
<gene>
    <name type="primary">FES1</name>
    <name type="ordered locus">DEHA2F15180g</name>
</gene>
<feature type="chain" id="PRO_0000285393" description="Hsp70 nucleotide exchange factor FES1">
    <location>
        <begin position="1"/>
        <end position="284"/>
    </location>
</feature>
<feature type="repeat" description="ARM 1">
    <location>
        <begin position="13"/>
        <end position="55"/>
    </location>
</feature>
<feature type="repeat" description="ARM 2">
    <location>
        <begin position="117"/>
        <end position="158"/>
    </location>
</feature>
<feature type="repeat" description="ARM 3">
    <location>
        <begin position="161"/>
        <end position="199"/>
    </location>
</feature>
<feature type="repeat" description="ARM 4">
    <location>
        <begin position="204"/>
        <end position="244"/>
    </location>
</feature>
<protein>
    <recommendedName>
        <fullName>Hsp70 nucleotide exchange factor FES1</fullName>
    </recommendedName>
</protein>
<keyword id="KW-0963">Cytoplasm</keyword>
<keyword id="KW-1185">Reference proteome</keyword>
<keyword id="KW-0677">Repeat</keyword>
<keyword id="KW-0810">Translation regulation</keyword>
<sequence>MDKLLQWSIAQQSGDQEAIEKIGKPDPKMLEQLFGGPDEPALMKQAIMVIDNEEATLENREIAFDNFEMLIENMDNANNIENIKLWQSVIDKMSAETPTSLRVYAASCAGIAVQNNPKSQEDFLKYDGLASLISICNEEDVPTELRLKALFAISSLIRNFEVGYAKFDELDGWSVVKFNENEDHKVKLRILSLVSAILSTPLDKKKEEHVHREKLVANIISILKKDGHIGCIDKALNIISQLASSEFEFSSSEIGDIAQGLEEIEKLKDSISEDDYNSVKQVVN</sequence>
<comment type="function">
    <text evidence="1">Functions as a nucleotide exchange factor (NEF) for Hsp70 chaperones which accelerates the release of ADP. Required for fully efficient Hsp70-mediated folding of proteins (By similarity).</text>
</comment>
<comment type="subcellular location">
    <subcellularLocation>
        <location evidence="1">Cytoplasm</location>
    </subcellularLocation>
</comment>
<comment type="similarity">
    <text evidence="2">Belongs to the FES1 family.</text>
</comment>
<accession>Q6BLA1</accession>
<name>FES1_DEBHA</name>
<reference key="1">
    <citation type="journal article" date="2004" name="Nature">
        <title>Genome evolution in yeasts.</title>
        <authorList>
            <person name="Dujon B."/>
            <person name="Sherman D."/>
            <person name="Fischer G."/>
            <person name="Durrens P."/>
            <person name="Casaregola S."/>
            <person name="Lafontaine I."/>
            <person name="de Montigny J."/>
            <person name="Marck C."/>
            <person name="Neuveglise C."/>
            <person name="Talla E."/>
            <person name="Goffard N."/>
            <person name="Frangeul L."/>
            <person name="Aigle M."/>
            <person name="Anthouard V."/>
            <person name="Babour A."/>
            <person name="Barbe V."/>
            <person name="Barnay S."/>
            <person name="Blanchin S."/>
            <person name="Beckerich J.-M."/>
            <person name="Beyne E."/>
            <person name="Bleykasten C."/>
            <person name="Boisrame A."/>
            <person name="Boyer J."/>
            <person name="Cattolico L."/>
            <person name="Confanioleri F."/>
            <person name="de Daruvar A."/>
            <person name="Despons L."/>
            <person name="Fabre E."/>
            <person name="Fairhead C."/>
            <person name="Ferry-Dumazet H."/>
            <person name="Groppi A."/>
            <person name="Hantraye F."/>
            <person name="Hennequin C."/>
            <person name="Jauniaux N."/>
            <person name="Joyet P."/>
            <person name="Kachouri R."/>
            <person name="Kerrest A."/>
            <person name="Koszul R."/>
            <person name="Lemaire M."/>
            <person name="Lesur I."/>
            <person name="Ma L."/>
            <person name="Muller H."/>
            <person name="Nicaud J.-M."/>
            <person name="Nikolski M."/>
            <person name="Oztas S."/>
            <person name="Ozier-Kalogeropoulos O."/>
            <person name="Pellenz S."/>
            <person name="Potier S."/>
            <person name="Richard G.-F."/>
            <person name="Straub M.-L."/>
            <person name="Suleau A."/>
            <person name="Swennen D."/>
            <person name="Tekaia F."/>
            <person name="Wesolowski-Louvel M."/>
            <person name="Westhof E."/>
            <person name="Wirth B."/>
            <person name="Zeniou-Meyer M."/>
            <person name="Zivanovic Y."/>
            <person name="Bolotin-Fukuhara M."/>
            <person name="Thierry A."/>
            <person name="Bouchier C."/>
            <person name="Caudron B."/>
            <person name="Scarpelli C."/>
            <person name="Gaillardin C."/>
            <person name="Weissenbach J."/>
            <person name="Wincker P."/>
            <person name="Souciet J.-L."/>
        </authorList>
    </citation>
    <scope>NUCLEOTIDE SEQUENCE [LARGE SCALE GENOMIC DNA]</scope>
    <source>
        <strain>ATCC 36239 / CBS 767 / BCRC 21394 / JCM 1990 / NBRC 0083 / IGC 2968</strain>
    </source>
</reference>
<proteinExistence type="inferred from homology"/>